<organism>
    <name type="scientific">Escherichia fergusonii (strain ATCC 35469 / DSM 13698 / CCUG 18766 / IAM 14443 / JCM 21226 / LMG 7866 / NBRC 102419 / NCTC 12128 / CDC 0568-73)</name>
    <dbReference type="NCBI Taxonomy" id="585054"/>
    <lineage>
        <taxon>Bacteria</taxon>
        <taxon>Pseudomonadati</taxon>
        <taxon>Pseudomonadota</taxon>
        <taxon>Gammaproteobacteria</taxon>
        <taxon>Enterobacterales</taxon>
        <taxon>Enterobacteriaceae</taxon>
        <taxon>Escherichia</taxon>
    </lineage>
</organism>
<feature type="chain" id="PRO_1000136540" description="UPF0253 protein YaeP">
    <location>
        <begin position="1"/>
        <end position="66"/>
    </location>
</feature>
<sequence length="66" mass="7214">MEKYCELIRKRYAEIASGDLGYVPDALGCVLKVLNEMAADDALSEAVREKAAYAAANLLVSDYVNE</sequence>
<name>YAEP_ESCF3</name>
<reference key="1">
    <citation type="journal article" date="2009" name="PLoS Genet.">
        <title>Organised genome dynamics in the Escherichia coli species results in highly diverse adaptive paths.</title>
        <authorList>
            <person name="Touchon M."/>
            <person name="Hoede C."/>
            <person name="Tenaillon O."/>
            <person name="Barbe V."/>
            <person name="Baeriswyl S."/>
            <person name="Bidet P."/>
            <person name="Bingen E."/>
            <person name="Bonacorsi S."/>
            <person name="Bouchier C."/>
            <person name="Bouvet O."/>
            <person name="Calteau A."/>
            <person name="Chiapello H."/>
            <person name="Clermont O."/>
            <person name="Cruveiller S."/>
            <person name="Danchin A."/>
            <person name="Diard M."/>
            <person name="Dossat C."/>
            <person name="Karoui M.E."/>
            <person name="Frapy E."/>
            <person name="Garry L."/>
            <person name="Ghigo J.M."/>
            <person name="Gilles A.M."/>
            <person name="Johnson J."/>
            <person name="Le Bouguenec C."/>
            <person name="Lescat M."/>
            <person name="Mangenot S."/>
            <person name="Martinez-Jehanne V."/>
            <person name="Matic I."/>
            <person name="Nassif X."/>
            <person name="Oztas S."/>
            <person name="Petit M.A."/>
            <person name="Pichon C."/>
            <person name="Rouy Z."/>
            <person name="Ruf C.S."/>
            <person name="Schneider D."/>
            <person name="Tourret J."/>
            <person name="Vacherie B."/>
            <person name="Vallenet D."/>
            <person name="Medigue C."/>
            <person name="Rocha E.P.C."/>
            <person name="Denamur E."/>
        </authorList>
    </citation>
    <scope>NUCLEOTIDE SEQUENCE [LARGE SCALE GENOMIC DNA]</scope>
    <source>
        <strain>ATCC 35469 / DSM 13698 / BCRC 15582 / CCUG 18766 / IAM 14443 / JCM 21226 / LMG 7866 / NBRC 102419 / NCTC 12128 / CDC 0568-73</strain>
    </source>
</reference>
<accession>B7LW69</accession>
<comment type="similarity">
    <text evidence="1">Belongs to the UPF0253 family.</text>
</comment>
<evidence type="ECO:0000255" key="1">
    <source>
        <dbReference type="HAMAP-Rule" id="MF_01064"/>
    </source>
</evidence>
<dbReference type="EMBL" id="CU928158">
    <property type="protein sequence ID" value="CAQ87793.1"/>
    <property type="molecule type" value="Genomic_DNA"/>
</dbReference>
<dbReference type="RefSeq" id="WP_000417058.1">
    <property type="nucleotide sequence ID" value="NC_011740.1"/>
</dbReference>
<dbReference type="SMR" id="B7LW69"/>
<dbReference type="KEGG" id="efe:EFER_0213"/>
<dbReference type="HOGENOM" id="CLU_190008_0_0_6"/>
<dbReference type="OrthoDB" id="5900992at2"/>
<dbReference type="Proteomes" id="UP000000745">
    <property type="component" value="Chromosome"/>
</dbReference>
<dbReference type="HAMAP" id="MF_01064">
    <property type="entry name" value="UPF0253"/>
    <property type="match status" value="1"/>
</dbReference>
<dbReference type="InterPro" id="IPR009624">
    <property type="entry name" value="UPF0253"/>
</dbReference>
<dbReference type="NCBIfam" id="NF003436">
    <property type="entry name" value="PRK04964.1"/>
    <property type="match status" value="1"/>
</dbReference>
<dbReference type="Pfam" id="PF06786">
    <property type="entry name" value="UPF0253"/>
    <property type="match status" value="1"/>
</dbReference>
<gene>
    <name evidence="1" type="primary">yaeP</name>
    <name type="ordered locus">EFER_0213</name>
</gene>
<proteinExistence type="inferred from homology"/>
<protein>
    <recommendedName>
        <fullName evidence="1">UPF0253 protein YaeP</fullName>
    </recommendedName>
</protein>